<gene>
    <name evidence="1" type="primary">dnaJ</name>
    <name type="ordered locus">FTW_0572</name>
</gene>
<sequence length="371" mass="41468">MQQKCYYEILNVSKTASGVEIKRAYRKLAMEYHPDRNPGDKEAEIKFKEISEAYEILSDDSKRSRYDQFGHAGVNQQSGFGGTGGFEDIFDTFFGGGTSRGSNRSRASRGSDLEYTLEITLEEAFFGVEKEITIPRMESCDSCDGTGSKSRSKTTCHACHGQGTIRRQQGFFAFEQTCPVCNGTGYSITDPCDACYGNGKVKKQKTLKVKIPEGVDNGDRIRLQGEGDSGSNGAMNGDLYVQIIIKEHKIFERRDINLYCEMPISFTKACIGGDIKVPTLDGEVVLKVVPETQTGKVFRLREKGMKSLRGHRRGDLLCKVVVETPVNLSAEQKELLEKFADSLGEDYQSKHAPKSKTWFDNVKDYAKKFFE</sequence>
<comment type="function">
    <text evidence="1">Participates actively in the response to hyperosmotic and heat shock by preventing the aggregation of stress-denatured proteins and by disaggregating proteins, also in an autonomous, DnaK-independent fashion. Unfolded proteins bind initially to DnaJ; upon interaction with the DnaJ-bound protein, DnaK hydrolyzes its bound ATP, resulting in the formation of a stable complex. GrpE releases ADP from DnaK; ATP binding to DnaK triggers the release of the substrate protein, thus completing the reaction cycle. Several rounds of ATP-dependent interactions between DnaJ, DnaK and GrpE are required for fully efficient folding. Also involved, together with DnaK and GrpE, in the DNA replication of plasmids through activation of initiation proteins.</text>
</comment>
<comment type="cofactor">
    <cofactor evidence="1">
        <name>Zn(2+)</name>
        <dbReference type="ChEBI" id="CHEBI:29105"/>
    </cofactor>
    <text evidence="1">Binds 2 Zn(2+) ions per monomer.</text>
</comment>
<comment type="subunit">
    <text evidence="1">Homodimer.</text>
</comment>
<comment type="subcellular location">
    <subcellularLocation>
        <location evidence="1">Cytoplasm</location>
    </subcellularLocation>
</comment>
<comment type="domain">
    <text evidence="1">The J domain is necessary and sufficient to stimulate DnaK ATPase activity. Zinc center 1 plays an important role in the autonomous, DnaK-independent chaperone activity of DnaJ. Zinc center 2 is essential for interaction with DnaK and for DnaJ activity.</text>
</comment>
<comment type="similarity">
    <text evidence="1">Belongs to the DnaJ family.</text>
</comment>
<accession>A4IX29</accession>
<dbReference type="EMBL" id="CP000608">
    <property type="protein sequence ID" value="ABO46481.1"/>
    <property type="molecule type" value="Genomic_DNA"/>
</dbReference>
<dbReference type="RefSeq" id="WP_003030305.1">
    <property type="nucleotide sequence ID" value="NC_009257.1"/>
</dbReference>
<dbReference type="SMR" id="A4IX29"/>
<dbReference type="KEGG" id="ftw:FTW_0572"/>
<dbReference type="HOGENOM" id="CLU_017633_0_7_6"/>
<dbReference type="GO" id="GO:0005737">
    <property type="term" value="C:cytoplasm"/>
    <property type="evidence" value="ECO:0007669"/>
    <property type="project" value="UniProtKB-SubCell"/>
</dbReference>
<dbReference type="GO" id="GO:0005524">
    <property type="term" value="F:ATP binding"/>
    <property type="evidence" value="ECO:0007669"/>
    <property type="project" value="InterPro"/>
</dbReference>
<dbReference type="GO" id="GO:0031072">
    <property type="term" value="F:heat shock protein binding"/>
    <property type="evidence" value="ECO:0007669"/>
    <property type="project" value="InterPro"/>
</dbReference>
<dbReference type="GO" id="GO:0051082">
    <property type="term" value="F:unfolded protein binding"/>
    <property type="evidence" value="ECO:0007669"/>
    <property type="project" value="UniProtKB-UniRule"/>
</dbReference>
<dbReference type="GO" id="GO:0008270">
    <property type="term" value="F:zinc ion binding"/>
    <property type="evidence" value="ECO:0007669"/>
    <property type="project" value="UniProtKB-UniRule"/>
</dbReference>
<dbReference type="GO" id="GO:0051085">
    <property type="term" value="P:chaperone cofactor-dependent protein refolding"/>
    <property type="evidence" value="ECO:0007669"/>
    <property type="project" value="TreeGrafter"/>
</dbReference>
<dbReference type="GO" id="GO:0006260">
    <property type="term" value="P:DNA replication"/>
    <property type="evidence" value="ECO:0007669"/>
    <property type="project" value="UniProtKB-KW"/>
</dbReference>
<dbReference type="GO" id="GO:0042026">
    <property type="term" value="P:protein refolding"/>
    <property type="evidence" value="ECO:0007669"/>
    <property type="project" value="TreeGrafter"/>
</dbReference>
<dbReference type="GO" id="GO:0009408">
    <property type="term" value="P:response to heat"/>
    <property type="evidence" value="ECO:0007669"/>
    <property type="project" value="InterPro"/>
</dbReference>
<dbReference type="CDD" id="cd06257">
    <property type="entry name" value="DnaJ"/>
    <property type="match status" value="1"/>
</dbReference>
<dbReference type="CDD" id="cd10747">
    <property type="entry name" value="DnaJ_C"/>
    <property type="match status" value="1"/>
</dbReference>
<dbReference type="CDD" id="cd10719">
    <property type="entry name" value="DnaJ_zf"/>
    <property type="match status" value="1"/>
</dbReference>
<dbReference type="FunFam" id="1.10.287.110:FF:000034">
    <property type="entry name" value="Chaperone protein DnaJ"/>
    <property type="match status" value="1"/>
</dbReference>
<dbReference type="FunFam" id="2.10.230.10:FF:000002">
    <property type="entry name" value="Molecular chaperone DnaJ"/>
    <property type="match status" value="1"/>
</dbReference>
<dbReference type="FunFam" id="2.60.260.20:FF:000004">
    <property type="entry name" value="Molecular chaperone DnaJ"/>
    <property type="match status" value="1"/>
</dbReference>
<dbReference type="Gene3D" id="1.10.287.110">
    <property type="entry name" value="DnaJ domain"/>
    <property type="match status" value="1"/>
</dbReference>
<dbReference type="Gene3D" id="2.10.230.10">
    <property type="entry name" value="Heat shock protein DnaJ, cysteine-rich domain"/>
    <property type="match status" value="1"/>
</dbReference>
<dbReference type="Gene3D" id="2.60.260.20">
    <property type="entry name" value="Urease metallochaperone UreE, N-terminal domain"/>
    <property type="match status" value="2"/>
</dbReference>
<dbReference type="HAMAP" id="MF_01152">
    <property type="entry name" value="DnaJ"/>
    <property type="match status" value="1"/>
</dbReference>
<dbReference type="InterPro" id="IPR012724">
    <property type="entry name" value="DnaJ"/>
</dbReference>
<dbReference type="InterPro" id="IPR002939">
    <property type="entry name" value="DnaJ_C"/>
</dbReference>
<dbReference type="InterPro" id="IPR001623">
    <property type="entry name" value="DnaJ_domain"/>
</dbReference>
<dbReference type="InterPro" id="IPR018253">
    <property type="entry name" value="DnaJ_domain_CS"/>
</dbReference>
<dbReference type="InterPro" id="IPR008971">
    <property type="entry name" value="HSP40/DnaJ_pept-bd"/>
</dbReference>
<dbReference type="InterPro" id="IPR001305">
    <property type="entry name" value="HSP_DnaJ_Cys-rich_dom"/>
</dbReference>
<dbReference type="InterPro" id="IPR036410">
    <property type="entry name" value="HSP_DnaJ_Cys-rich_dom_sf"/>
</dbReference>
<dbReference type="InterPro" id="IPR036869">
    <property type="entry name" value="J_dom_sf"/>
</dbReference>
<dbReference type="NCBIfam" id="TIGR02349">
    <property type="entry name" value="DnaJ_bact"/>
    <property type="match status" value="1"/>
</dbReference>
<dbReference type="NCBIfam" id="NF008035">
    <property type="entry name" value="PRK10767.1"/>
    <property type="match status" value="1"/>
</dbReference>
<dbReference type="PANTHER" id="PTHR43096:SF48">
    <property type="entry name" value="CHAPERONE PROTEIN DNAJ"/>
    <property type="match status" value="1"/>
</dbReference>
<dbReference type="PANTHER" id="PTHR43096">
    <property type="entry name" value="DNAJ HOMOLOG 1, MITOCHONDRIAL-RELATED"/>
    <property type="match status" value="1"/>
</dbReference>
<dbReference type="Pfam" id="PF00226">
    <property type="entry name" value="DnaJ"/>
    <property type="match status" value="1"/>
</dbReference>
<dbReference type="Pfam" id="PF01556">
    <property type="entry name" value="DnaJ_C"/>
    <property type="match status" value="1"/>
</dbReference>
<dbReference type="Pfam" id="PF00684">
    <property type="entry name" value="DnaJ_CXXCXGXG"/>
    <property type="match status" value="1"/>
</dbReference>
<dbReference type="PRINTS" id="PR00625">
    <property type="entry name" value="JDOMAIN"/>
</dbReference>
<dbReference type="SMART" id="SM00271">
    <property type="entry name" value="DnaJ"/>
    <property type="match status" value="1"/>
</dbReference>
<dbReference type="SUPFAM" id="SSF46565">
    <property type="entry name" value="Chaperone J-domain"/>
    <property type="match status" value="1"/>
</dbReference>
<dbReference type="SUPFAM" id="SSF57938">
    <property type="entry name" value="DnaJ/Hsp40 cysteine-rich domain"/>
    <property type="match status" value="1"/>
</dbReference>
<dbReference type="SUPFAM" id="SSF49493">
    <property type="entry name" value="HSP40/DnaJ peptide-binding domain"/>
    <property type="match status" value="2"/>
</dbReference>
<dbReference type="PROSITE" id="PS00636">
    <property type="entry name" value="DNAJ_1"/>
    <property type="match status" value="1"/>
</dbReference>
<dbReference type="PROSITE" id="PS50076">
    <property type="entry name" value="DNAJ_2"/>
    <property type="match status" value="1"/>
</dbReference>
<dbReference type="PROSITE" id="PS51188">
    <property type="entry name" value="ZF_CR"/>
    <property type="match status" value="1"/>
</dbReference>
<feature type="chain" id="PRO_1000085198" description="Chaperone protein DnaJ">
    <location>
        <begin position="1"/>
        <end position="371"/>
    </location>
</feature>
<feature type="domain" description="J" evidence="1">
    <location>
        <begin position="5"/>
        <end position="70"/>
    </location>
</feature>
<feature type="repeat" description="CXXCXGXG motif">
    <location>
        <begin position="140"/>
        <end position="147"/>
    </location>
</feature>
<feature type="repeat" description="CXXCXGXG motif">
    <location>
        <begin position="156"/>
        <end position="163"/>
    </location>
</feature>
<feature type="repeat" description="CXXCXGXG motif">
    <location>
        <begin position="178"/>
        <end position="185"/>
    </location>
</feature>
<feature type="repeat" description="CXXCXGXG motif">
    <location>
        <begin position="192"/>
        <end position="199"/>
    </location>
</feature>
<feature type="zinc finger region" description="CR-type" evidence="1">
    <location>
        <begin position="127"/>
        <end position="204"/>
    </location>
</feature>
<feature type="binding site" evidence="1">
    <location>
        <position position="140"/>
    </location>
    <ligand>
        <name>Zn(2+)</name>
        <dbReference type="ChEBI" id="CHEBI:29105"/>
        <label>1</label>
    </ligand>
</feature>
<feature type="binding site" evidence="1">
    <location>
        <position position="143"/>
    </location>
    <ligand>
        <name>Zn(2+)</name>
        <dbReference type="ChEBI" id="CHEBI:29105"/>
        <label>1</label>
    </ligand>
</feature>
<feature type="binding site" evidence="1">
    <location>
        <position position="156"/>
    </location>
    <ligand>
        <name>Zn(2+)</name>
        <dbReference type="ChEBI" id="CHEBI:29105"/>
        <label>2</label>
    </ligand>
</feature>
<feature type="binding site" evidence="1">
    <location>
        <position position="159"/>
    </location>
    <ligand>
        <name>Zn(2+)</name>
        <dbReference type="ChEBI" id="CHEBI:29105"/>
        <label>2</label>
    </ligand>
</feature>
<feature type="binding site" evidence="1">
    <location>
        <position position="178"/>
    </location>
    <ligand>
        <name>Zn(2+)</name>
        <dbReference type="ChEBI" id="CHEBI:29105"/>
        <label>2</label>
    </ligand>
</feature>
<feature type="binding site" evidence="1">
    <location>
        <position position="181"/>
    </location>
    <ligand>
        <name>Zn(2+)</name>
        <dbReference type="ChEBI" id="CHEBI:29105"/>
        <label>2</label>
    </ligand>
</feature>
<feature type="binding site" evidence="1">
    <location>
        <position position="192"/>
    </location>
    <ligand>
        <name>Zn(2+)</name>
        <dbReference type="ChEBI" id="CHEBI:29105"/>
        <label>1</label>
    </ligand>
</feature>
<feature type="binding site" evidence="1">
    <location>
        <position position="195"/>
    </location>
    <ligand>
        <name>Zn(2+)</name>
        <dbReference type="ChEBI" id="CHEBI:29105"/>
        <label>1</label>
    </ligand>
</feature>
<keyword id="KW-0143">Chaperone</keyword>
<keyword id="KW-0963">Cytoplasm</keyword>
<keyword id="KW-0235">DNA replication</keyword>
<keyword id="KW-0479">Metal-binding</keyword>
<keyword id="KW-0677">Repeat</keyword>
<keyword id="KW-0346">Stress response</keyword>
<keyword id="KW-0862">Zinc</keyword>
<keyword id="KW-0863">Zinc-finger</keyword>
<name>DNAJ_FRATW</name>
<proteinExistence type="inferred from homology"/>
<evidence type="ECO:0000255" key="1">
    <source>
        <dbReference type="HAMAP-Rule" id="MF_01152"/>
    </source>
</evidence>
<organism>
    <name type="scientific">Francisella tularensis subsp. tularensis (strain WY96-3418)</name>
    <dbReference type="NCBI Taxonomy" id="418136"/>
    <lineage>
        <taxon>Bacteria</taxon>
        <taxon>Pseudomonadati</taxon>
        <taxon>Pseudomonadota</taxon>
        <taxon>Gammaproteobacteria</taxon>
        <taxon>Thiotrichales</taxon>
        <taxon>Francisellaceae</taxon>
        <taxon>Francisella</taxon>
    </lineage>
</organism>
<reference key="1">
    <citation type="journal article" date="2007" name="PLoS ONE">
        <title>Complete genomic characterization of a pathogenic A.II strain of Francisella tularensis subspecies tularensis.</title>
        <authorList>
            <person name="Beckstrom-Sternberg S.M."/>
            <person name="Auerbach R.K."/>
            <person name="Godbole S."/>
            <person name="Pearson J.V."/>
            <person name="Beckstrom-Sternberg J.S."/>
            <person name="Deng Z."/>
            <person name="Munk C."/>
            <person name="Kubota K."/>
            <person name="Zhou Y."/>
            <person name="Bruce D."/>
            <person name="Noronha J."/>
            <person name="Scheuermann R.H."/>
            <person name="Wang A."/>
            <person name="Wei X."/>
            <person name="Wang J."/>
            <person name="Hao J."/>
            <person name="Wagner D.M."/>
            <person name="Brettin T.S."/>
            <person name="Brown N."/>
            <person name="Gilna P."/>
            <person name="Keim P.S."/>
        </authorList>
    </citation>
    <scope>NUCLEOTIDE SEQUENCE [LARGE SCALE GENOMIC DNA]</scope>
    <source>
        <strain>WY96-3418</strain>
    </source>
</reference>
<protein>
    <recommendedName>
        <fullName evidence="1">Chaperone protein DnaJ</fullName>
    </recommendedName>
</protein>